<reference key="1">
    <citation type="journal article" date="2009" name="PLoS Genet.">
        <title>Organised genome dynamics in the Escherichia coli species results in highly diverse adaptive paths.</title>
        <authorList>
            <person name="Touchon M."/>
            <person name="Hoede C."/>
            <person name="Tenaillon O."/>
            <person name="Barbe V."/>
            <person name="Baeriswyl S."/>
            <person name="Bidet P."/>
            <person name="Bingen E."/>
            <person name="Bonacorsi S."/>
            <person name="Bouchier C."/>
            <person name="Bouvet O."/>
            <person name="Calteau A."/>
            <person name="Chiapello H."/>
            <person name="Clermont O."/>
            <person name="Cruveiller S."/>
            <person name="Danchin A."/>
            <person name="Diard M."/>
            <person name="Dossat C."/>
            <person name="Karoui M.E."/>
            <person name="Frapy E."/>
            <person name="Garry L."/>
            <person name="Ghigo J.M."/>
            <person name="Gilles A.M."/>
            <person name="Johnson J."/>
            <person name="Le Bouguenec C."/>
            <person name="Lescat M."/>
            <person name="Mangenot S."/>
            <person name="Martinez-Jehanne V."/>
            <person name="Matic I."/>
            <person name="Nassif X."/>
            <person name="Oztas S."/>
            <person name="Petit M.A."/>
            <person name="Pichon C."/>
            <person name="Rouy Z."/>
            <person name="Ruf C.S."/>
            <person name="Schneider D."/>
            <person name="Tourret J."/>
            <person name="Vacherie B."/>
            <person name="Vallenet D."/>
            <person name="Medigue C."/>
            <person name="Rocha E.P.C."/>
            <person name="Denamur E."/>
        </authorList>
    </citation>
    <scope>NUCLEOTIDE SEQUENCE [LARGE SCALE GENOMIC DNA]</scope>
    <source>
        <strain>IAI39 / ExPEC</strain>
    </source>
</reference>
<evidence type="ECO:0000255" key="1">
    <source>
        <dbReference type="HAMAP-Rule" id="MF_00148"/>
    </source>
</evidence>
<dbReference type="EC" id="3.2.2.27" evidence="1"/>
<dbReference type="EMBL" id="CU928164">
    <property type="protein sequence ID" value="CAR18910.1"/>
    <property type="molecule type" value="Genomic_DNA"/>
</dbReference>
<dbReference type="RefSeq" id="WP_001262726.1">
    <property type="nucleotide sequence ID" value="NC_011750.1"/>
</dbReference>
<dbReference type="RefSeq" id="YP_002408724.1">
    <property type="nucleotide sequence ID" value="NC_011750.1"/>
</dbReference>
<dbReference type="SMR" id="B7NRN6"/>
<dbReference type="STRING" id="585057.ECIAI39_2788"/>
<dbReference type="KEGG" id="ect:ECIAI39_2788"/>
<dbReference type="PATRIC" id="fig|585057.6.peg.2896"/>
<dbReference type="HOGENOM" id="CLU_032162_3_0_6"/>
<dbReference type="Proteomes" id="UP000000749">
    <property type="component" value="Chromosome"/>
</dbReference>
<dbReference type="GO" id="GO:0005737">
    <property type="term" value="C:cytoplasm"/>
    <property type="evidence" value="ECO:0007669"/>
    <property type="project" value="UniProtKB-SubCell"/>
</dbReference>
<dbReference type="GO" id="GO:0004844">
    <property type="term" value="F:uracil DNA N-glycosylase activity"/>
    <property type="evidence" value="ECO:0007669"/>
    <property type="project" value="UniProtKB-UniRule"/>
</dbReference>
<dbReference type="GO" id="GO:0097510">
    <property type="term" value="P:base-excision repair, AP site formation via deaminated base removal"/>
    <property type="evidence" value="ECO:0007669"/>
    <property type="project" value="TreeGrafter"/>
</dbReference>
<dbReference type="CDD" id="cd10027">
    <property type="entry name" value="UDG-F1-like"/>
    <property type="match status" value="1"/>
</dbReference>
<dbReference type="FunFam" id="3.40.470.10:FF:000001">
    <property type="entry name" value="Uracil-DNA glycosylase"/>
    <property type="match status" value="1"/>
</dbReference>
<dbReference type="Gene3D" id="3.40.470.10">
    <property type="entry name" value="Uracil-DNA glycosylase-like domain"/>
    <property type="match status" value="1"/>
</dbReference>
<dbReference type="HAMAP" id="MF_00148">
    <property type="entry name" value="UDG"/>
    <property type="match status" value="1"/>
</dbReference>
<dbReference type="InterPro" id="IPR002043">
    <property type="entry name" value="UDG_fam1"/>
</dbReference>
<dbReference type="InterPro" id="IPR018085">
    <property type="entry name" value="Ura-DNA_Glyclase_AS"/>
</dbReference>
<dbReference type="InterPro" id="IPR005122">
    <property type="entry name" value="Uracil-DNA_glycosylase-like"/>
</dbReference>
<dbReference type="InterPro" id="IPR036895">
    <property type="entry name" value="Uracil-DNA_glycosylase-like_sf"/>
</dbReference>
<dbReference type="NCBIfam" id="NF003588">
    <property type="entry name" value="PRK05254.1-1"/>
    <property type="match status" value="1"/>
</dbReference>
<dbReference type="NCBIfam" id="NF003589">
    <property type="entry name" value="PRK05254.1-2"/>
    <property type="match status" value="1"/>
</dbReference>
<dbReference type="NCBIfam" id="NF003591">
    <property type="entry name" value="PRK05254.1-4"/>
    <property type="match status" value="1"/>
</dbReference>
<dbReference type="NCBIfam" id="NF003592">
    <property type="entry name" value="PRK05254.1-5"/>
    <property type="match status" value="1"/>
</dbReference>
<dbReference type="NCBIfam" id="TIGR00628">
    <property type="entry name" value="ung"/>
    <property type="match status" value="1"/>
</dbReference>
<dbReference type="PANTHER" id="PTHR11264">
    <property type="entry name" value="URACIL-DNA GLYCOSYLASE"/>
    <property type="match status" value="1"/>
</dbReference>
<dbReference type="PANTHER" id="PTHR11264:SF0">
    <property type="entry name" value="URACIL-DNA GLYCOSYLASE"/>
    <property type="match status" value="1"/>
</dbReference>
<dbReference type="Pfam" id="PF03167">
    <property type="entry name" value="UDG"/>
    <property type="match status" value="1"/>
</dbReference>
<dbReference type="SMART" id="SM00986">
    <property type="entry name" value="UDG"/>
    <property type="match status" value="1"/>
</dbReference>
<dbReference type="SMART" id="SM00987">
    <property type="entry name" value="UreE_C"/>
    <property type="match status" value="1"/>
</dbReference>
<dbReference type="SUPFAM" id="SSF52141">
    <property type="entry name" value="Uracil-DNA glycosylase-like"/>
    <property type="match status" value="1"/>
</dbReference>
<dbReference type="PROSITE" id="PS00130">
    <property type="entry name" value="U_DNA_GLYCOSYLASE"/>
    <property type="match status" value="1"/>
</dbReference>
<keyword id="KW-0963">Cytoplasm</keyword>
<keyword id="KW-0227">DNA damage</keyword>
<keyword id="KW-0234">DNA repair</keyword>
<keyword id="KW-0378">Hydrolase</keyword>
<organism>
    <name type="scientific">Escherichia coli O7:K1 (strain IAI39 / ExPEC)</name>
    <dbReference type="NCBI Taxonomy" id="585057"/>
    <lineage>
        <taxon>Bacteria</taxon>
        <taxon>Pseudomonadati</taxon>
        <taxon>Pseudomonadota</taxon>
        <taxon>Gammaproteobacteria</taxon>
        <taxon>Enterobacterales</taxon>
        <taxon>Enterobacteriaceae</taxon>
        <taxon>Escherichia</taxon>
    </lineage>
</organism>
<proteinExistence type="inferred from homology"/>
<protein>
    <recommendedName>
        <fullName evidence="1">Uracil-DNA glycosylase</fullName>
        <shortName evidence="1">UDG</shortName>
        <ecNumber evidence="1">3.2.2.27</ecNumber>
    </recommendedName>
</protein>
<comment type="function">
    <text evidence="1">Excises uracil residues from the DNA which can arise as a result of misincorporation of dUMP residues by DNA polymerase or due to deamination of cytosine.</text>
</comment>
<comment type="catalytic activity">
    <reaction evidence="1">
        <text>Hydrolyzes single-stranded DNA or mismatched double-stranded DNA and polynucleotides, releasing free uracil.</text>
        <dbReference type="EC" id="3.2.2.27"/>
    </reaction>
</comment>
<comment type="subcellular location">
    <subcellularLocation>
        <location evidence="1">Cytoplasm</location>
    </subcellularLocation>
</comment>
<comment type="similarity">
    <text evidence="1">Belongs to the uracil-DNA glycosylase (UDG) superfamily. UNG family.</text>
</comment>
<accession>B7NRN6</accession>
<feature type="chain" id="PRO_1000199782" description="Uracil-DNA glycosylase">
    <location>
        <begin position="1"/>
        <end position="229"/>
    </location>
</feature>
<feature type="active site" description="Proton acceptor" evidence="1">
    <location>
        <position position="64"/>
    </location>
</feature>
<gene>
    <name evidence="1" type="primary">ung</name>
    <name type="ordered locus">ECIAI39_2788</name>
</gene>
<name>UNG_ECO7I</name>
<sequence>MANELTWHDVLAEEKQQPYFLNTLQTVASERQSGVTIYPPQKDVFNAFRFTELGDVKVVILGQDPYHGPGQAHGLAFSVRPGIATPPSLLNMYKELENTIPGFTRPNHGYLESWARQGVLLLNTVLTVRAGQAHSHASLGWETFTDKVISLINQHRKGVVFLLWGSHAQKKGAIIDKQRHHVLKAPHPSPLSAHRGFFGCNHFVLANQWLEQRGETPIDWMPVLPAESE</sequence>